<evidence type="ECO:0000250" key="1">
    <source>
        <dbReference type="UniProtKB" id="A0PFK5"/>
    </source>
</evidence>
<evidence type="ECO:0000305" key="2"/>
<name>CAPZA_CAEEL</name>
<feature type="chain" id="PRO_0000208637" description="F-actin-capping protein subunit alpha">
    <location>
        <begin position="1"/>
        <end position="282"/>
    </location>
</feature>
<keyword id="KW-0117">Actin capping</keyword>
<keyword id="KW-0009">Actin-binding</keyword>
<keyword id="KW-0963">Cytoplasm</keyword>
<keyword id="KW-0206">Cytoskeleton</keyword>
<keyword id="KW-1185">Reference proteome</keyword>
<proteinExistence type="evidence at transcript level"/>
<comment type="function">
    <text>F-actin-capping proteins bind in a Ca(2+)-independent manner to the fast growing ends of actin filaments (barbed end) thereby blocking the exchange of subunits at these ends. Unlike other capping proteins (such as gelsolin and severin), these proteins do not sever actin filaments.</text>
</comment>
<comment type="subunit">
    <text>Component of the F-actin capping complex, composed of a heterodimer of an alpha and a beta subunit.</text>
</comment>
<comment type="subcellular location">
    <subcellularLocation>
        <location evidence="1">Cytoplasm</location>
        <location evidence="1">Cytoskeleton</location>
    </subcellularLocation>
</comment>
<comment type="similarity">
    <text evidence="2">Belongs to the F-actin-capping protein alpha subunit family.</text>
</comment>
<reference key="1">
    <citation type="journal article" date="1993" name="Mol. Biol. Cell">
        <title>The alpha and beta subunits of nematode actin capping protein function in yeast.</title>
        <authorList>
            <person name="Waddle J.A."/>
            <person name="Cooper J.A."/>
            <person name="Waterston R.H."/>
        </authorList>
    </citation>
    <scope>NUCLEOTIDE SEQUENCE [GENOMIC DNA / MRNA]</scope>
    <source>
        <strain>Bristol N2</strain>
    </source>
</reference>
<reference key="2">
    <citation type="journal article" date="1998" name="Science">
        <title>Genome sequence of the nematode C. elegans: a platform for investigating biology.</title>
        <authorList>
            <consortium name="The C. elegans sequencing consortium"/>
        </authorList>
    </citation>
    <scope>NUCLEOTIDE SEQUENCE [LARGE SCALE GENOMIC DNA]</scope>
    <source>
        <strain>Bristol N2</strain>
    </source>
</reference>
<organism>
    <name type="scientific">Caenorhabditis elegans</name>
    <dbReference type="NCBI Taxonomy" id="6239"/>
    <lineage>
        <taxon>Eukaryota</taxon>
        <taxon>Metazoa</taxon>
        <taxon>Ecdysozoa</taxon>
        <taxon>Nematoda</taxon>
        <taxon>Chromadorea</taxon>
        <taxon>Rhabditida</taxon>
        <taxon>Rhabditina</taxon>
        <taxon>Rhabditomorpha</taxon>
        <taxon>Rhabditoidea</taxon>
        <taxon>Rhabditidae</taxon>
        <taxon>Peloderinae</taxon>
        <taxon>Caenorhabditis</taxon>
    </lineage>
</organism>
<dbReference type="EMBL" id="Z18805">
    <property type="protein sequence ID" value="CAA79269.1"/>
    <property type="molecule type" value="Genomic_DNA"/>
</dbReference>
<dbReference type="EMBL" id="Z18853">
    <property type="protein sequence ID" value="CAA79305.1"/>
    <property type="molecule type" value="mRNA"/>
</dbReference>
<dbReference type="EMBL" id="FO080386">
    <property type="protein sequence ID" value="CCD63359.1"/>
    <property type="molecule type" value="Genomic_DNA"/>
</dbReference>
<dbReference type="PIR" id="A47734">
    <property type="entry name" value="A47734"/>
</dbReference>
<dbReference type="RefSeq" id="NP_501145.1">
    <property type="nucleotide sequence ID" value="NM_068744.6"/>
</dbReference>
<dbReference type="SMR" id="P34685"/>
<dbReference type="BioGRID" id="42616">
    <property type="interactions" value="16"/>
</dbReference>
<dbReference type="FunCoup" id="P34685">
    <property type="interactions" value="2635"/>
</dbReference>
<dbReference type="IntAct" id="P34685">
    <property type="interactions" value="1"/>
</dbReference>
<dbReference type="STRING" id="6239.D2024.6.2"/>
<dbReference type="PaxDb" id="6239-D2024.6"/>
<dbReference type="PeptideAtlas" id="P34685"/>
<dbReference type="EnsemblMetazoa" id="D2024.6.1">
    <property type="protein sequence ID" value="D2024.6.1"/>
    <property type="gene ID" value="WBGene00000292"/>
</dbReference>
<dbReference type="GeneID" id="177497"/>
<dbReference type="KEGG" id="cel:CELE_D2024.6"/>
<dbReference type="UCSC" id="D2024.6.2">
    <property type="organism name" value="c. elegans"/>
</dbReference>
<dbReference type="AGR" id="WB:WBGene00000292"/>
<dbReference type="CTD" id="177497"/>
<dbReference type="WormBase" id="D2024.6">
    <property type="protein sequence ID" value="CE04295"/>
    <property type="gene ID" value="WBGene00000292"/>
    <property type="gene designation" value="cap-1"/>
</dbReference>
<dbReference type="eggNOG" id="KOG0836">
    <property type="taxonomic scope" value="Eukaryota"/>
</dbReference>
<dbReference type="GeneTree" id="ENSGT00950000183119"/>
<dbReference type="HOGENOM" id="CLU_045161_0_0_1"/>
<dbReference type="InParanoid" id="P34685"/>
<dbReference type="OMA" id="VACIEDH"/>
<dbReference type="OrthoDB" id="340550at2759"/>
<dbReference type="PhylomeDB" id="P34685"/>
<dbReference type="Reactome" id="R-CEL-6807878">
    <property type="pathway name" value="COPI-mediated anterograde transport"/>
</dbReference>
<dbReference type="Reactome" id="R-CEL-6811436">
    <property type="pathway name" value="COPI-independent Golgi-to-ER retrograde traffic"/>
</dbReference>
<dbReference type="Reactome" id="R-CEL-983231">
    <property type="pathway name" value="Factors involved in megakaryocyte development and platelet production"/>
</dbReference>
<dbReference type="PRO" id="PR:P34685"/>
<dbReference type="Proteomes" id="UP000001940">
    <property type="component" value="Chromosome IV"/>
</dbReference>
<dbReference type="Bgee" id="WBGene00000292">
    <property type="expression patterns" value="Expressed in germ line (C elegans) and 4 other cell types or tissues"/>
</dbReference>
<dbReference type="GO" id="GO:0030863">
    <property type="term" value="C:cortical cytoskeleton"/>
    <property type="evidence" value="ECO:0000318"/>
    <property type="project" value="GO_Central"/>
</dbReference>
<dbReference type="GO" id="GO:0005869">
    <property type="term" value="C:dynactin complex"/>
    <property type="evidence" value="ECO:0000314"/>
    <property type="project" value="WormBase"/>
</dbReference>
<dbReference type="GO" id="GO:0008290">
    <property type="term" value="C:F-actin capping protein complex"/>
    <property type="evidence" value="ECO:0000318"/>
    <property type="project" value="GO_Central"/>
</dbReference>
<dbReference type="GO" id="GO:0051015">
    <property type="term" value="F:actin filament binding"/>
    <property type="evidence" value="ECO:0000318"/>
    <property type="project" value="GO_Central"/>
</dbReference>
<dbReference type="GO" id="GO:0030036">
    <property type="term" value="P:actin cytoskeleton organization"/>
    <property type="evidence" value="ECO:0000318"/>
    <property type="project" value="GO_Central"/>
</dbReference>
<dbReference type="GO" id="GO:0051016">
    <property type="term" value="P:barbed-end actin filament capping"/>
    <property type="evidence" value="ECO:0000318"/>
    <property type="project" value="GO_Central"/>
</dbReference>
<dbReference type="FunFam" id="3.30.1140.60:FF:000001">
    <property type="entry name" value="F-actin-capping protein subunit alpha"/>
    <property type="match status" value="1"/>
</dbReference>
<dbReference type="FunFam" id="3.90.1150.210:FF:000003">
    <property type="entry name" value="F-actin-capping protein subunit alpha"/>
    <property type="match status" value="1"/>
</dbReference>
<dbReference type="Gene3D" id="3.30.1140.60">
    <property type="entry name" value="F-actin capping protein, alpha subunit"/>
    <property type="match status" value="1"/>
</dbReference>
<dbReference type="Gene3D" id="3.90.1150.210">
    <property type="entry name" value="F-actin capping protein, beta subunit"/>
    <property type="match status" value="1"/>
</dbReference>
<dbReference type="InterPro" id="IPR002189">
    <property type="entry name" value="CapZ_alpha"/>
</dbReference>
<dbReference type="InterPro" id="IPR037282">
    <property type="entry name" value="CapZ_alpha/beta"/>
</dbReference>
<dbReference type="InterPro" id="IPR042276">
    <property type="entry name" value="CapZ_alpha/beta_2"/>
</dbReference>
<dbReference type="InterPro" id="IPR042489">
    <property type="entry name" value="CapZ_alpha_1"/>
</dbReference>
<dbReference type="InterPro" id="IPR017865">
    <property type="entry name" value="F-actin_cap_asu_CS"/>
</dbReference>
<dbReference type="PANTHER" id="PTHR10653">
    <property type="entry name" value="F-ACTIN-CAPPING PROTEIN SUBUNIT ALPHA"/>
    <property type="match status" value="1"/>
</dbReference>
<dbReference type="PANTHER" id="PTHR10653:SF0">
    <property type="entry name" value="F-ACTIN-CAPPING PROTEIN SUBUNIT ALPHA"/>
    <property type="match status" value="1"/>
</dbReference>
<dbReference type="Pfam" id="PF01267">
    <property type="entry name" value="F-actin_cap_A"/>
    <property type="match status" value="1"/>
</dbReference>
<dbReference type="PRINTS" id="PR00191">
    <property type="entry name" value="FACTINCAPA"/>
</dbReference>
<dbReference type="SUPFAM" id="SSF90096">
    <property type="entry name" value="Subunits of heterodimeric actin filament capping protein Capz"/>
    <property type="match status" value="1"/>
</dbReference>
<dbReference type="PROSITE" id="PS00748">
    <property type="entry name" value="F_ACTIN_CAPPING_A_1"/>
    <property type="match status" value="1"/>
</dbReference>
<dbReference type="PROSITE" id="PS00749">
    <property type="entry name" value="F_ACTIN_CAPPING_A_2"/>
    <property type="match status" value="1"/>
</dbReference>
<gene>
    <name type="primary">cap-1</name>
    <name type="ORF">D2024.6</name>
</gene>
<sequence>MSEISDAEKVRIASDFIKHAPPGEFNEVFNSVRMLLENDDLLKNKCVNAIAQYNVGQFVPVKLDGVAKQTLITPYNDLGNGRFYDEVSKKSFKYDHVRKEAADLQPHPAESGITEQWRQALQTQLDIYIDDHYAKSGTGVVFARNGVFTICIESHQFQPKNFCNGRWRSEWNVPVGDGKSGSQEMKGKILSQVHYYEDGNVQLFSEKEPVLKVNVSADFDKTAKEIIHAISEEETIYQNAVQENYANMSDTTFKALRRQLPVTRAKMDWNKAQTYRIGQEMK</sequence>
<accession>P34685</accession>
<protein>
    <recommendedName>
        <fullName>F-actin-capping protein subunit alpha</fullName>
    </recommendedName>
</protein>